<dbReference type="EMBL" id="AAFI02000104">
    <property type="protein sequence ID" value="EAL63542.1"/>
    <property type="molecule type" value="Genomic_DNA"/>
</dbReference>
<dbReference type="RefSeq" id="XP_637059.1">
    <property type="nucleotide sequence ID" value="XM_631967.1"/>
</dbReference>
<dbReference type="SMR" id="Q54JU3"/>
<dbReference type="FunCoup" id="Q54JU3">
    <property type="interactions" value="125"/>
</dbReference>
<dbReference type="STRING" id="44689.Q54JU3"/>
<dbReference type="PaxDb" id="44689-DDB0231214"/>
<dbReference type="EnsemblProtists" id="EAL63542">
    <property type="protein sequence ID" value="EAL63542"/>
    <property type="gene ID" value="DDB_G0287791"/>
</dbReference>
<dbReference type="GeneID" id="8626313"/>
<dbReference type="KEGG" id="ddi:DDB_G0287791"/>
<dbReference type="dictyBase" id="DDB_G0287791">
    <property type="gene designation" value="gcvH3"/>
</dbReference>
<dbReference type="VEuPathDB" id="AmoebaDB:DDB_G0287791"/>
<dbReference type="eggNOG" id="KOG3373">
    <property type="taxonomic scope" value="Eukaryota"/>
</dbReference>
<dbReference type="HOGENOM" id="CLU_097408_2_0_1"/>
<dbReference type="InParanoid" id="Q54JU3"/>
<dbReference type="OMA" id="ESHEWIK"/>
<dbReference type="PhylomeDB" id="Q54JU3"/>
<dbReference type="PRO" id="PR:Q54JU3"/>
<dbReference type="Proteomes" id="UP000002195">
    <property type="component" value="Chromosome 5"/>
</dbReference>
<dbReference type="GO" id="GO:0005960">
    <property type="term" value="C:glycine cleavage complex"/>
    <property type="evidence" value="ECO:0000318"/>
    <property type="project" value="GO_Central"/>
</dbReference>
<dbReference type="GO" id="GO:0005739">
    <property type="term" value="C:mitochondrion"/>
    <property type="evidence" value="ECO:0000318"/>
    <property type="project" value="GO_Central"/>
</dbReference>
<dbReference type="GO" id="GO:0019464">
    <property type="term" value="P:glycine decarboxylation via glycine cleavage system"/>
    <property type="evidence" value="ECO:0000318"/>
    <property type="project" value="GO_Central"/>
</dbReference>
<dbReference type="CDD" id="cd06848">
    <property type="entry name" value="GCS_H"/>
    <property type="match status" value="1"/>
</dbReference>
<dbReference type="Gene3D" id="2.40.50.100">
    <property type="match status" value="1"/>
</dbReference>
<dbReference type="InterPro" id="IPR000089">
    <property type="entry name" value="Biotin_lipoyl"/>
</dbReference>
<dbReference type="InterPro" id="IPR002930">
    <property type="entry name" value="GCV_H"/>
</dbReference>
<dbReference type="InterPro" id="IPR033753">
    <property type="entry name" value="GCV_H/Fam206"/>
</dbReference>
<dbReference type="InterPro" id="IPR011053">
    <property type="entry name" value="Single_hybrid_motif"/>
</dbReference>
<dbReference type="PANTHER" id="PTHR11715">
    <property type="entry name" value="GLYCINE CLEAVAGE SYSTEM H PROTEIN"/>
    <property type="match status" value="1"/>
</dbReference>
<dbReference type="PANTHER" id="PTHR11715:SF3">
    <property type="entry name" value="GLYCINE CLEAVAGE SYSTEM H PROTEIN-RELATED"/>
    <property type="match status" value="1"/>
</dbReference>
<dbReference type="Pfam" id="PF01597">
    <property type="entry name" value="GCV_H"/>
    <property type="match status" value="1"/>
</dbReference>
<dbReference type="SUPFAM" id="SSF51230">
    <property type="entry name" value="Single hybrid motif"/>
    <property type="match status" value="1"/>
</dbReference>
<dbReference type="PROSITE" id="PS50968">
    <property type="entry name" value="BIOTINYL_LIPOYL"/>
    <property type="match status" value="1"/>
</dbReference>
<protein>
    <recommendedName>
        <fullName>Putative glycine cleavage system H protein 3</fullName>
    </recommendedName>
</protein>
<gene>
    <name type="primary">gcvH3</name>
    <name type="synonym">gcvH</name>
    <name type="ORF">DDB_G0287791</name>
</gene>
<accession>Q54JU3</accession>
<reference key="1">
    <citation type="journal article" date="2005" name="Nature">
        <title>The genome of the social amoeba Dictyostelium discoideum.</title>
        <authorList>
            <person name="Eichinger L."/>
            <person name="Pachebat J.A."/>
            <person name="Gloeckner G."/>
            <person name="Rajandream M.A."/>
            <person name="Sucgang R."/>
            <person name="Berriman M."/>
            <person name="Song J."/>
            <person name="Olsen R."/>
            <person name="Szafranski K."/>
            <person name="Xu Q."/>
            <person name="Tunggal B."/>
            <person name="Kummerfeld S."/>
            <person name="Madera M."/>
            <person name="Konfortov B.A."/>
            <person name="Rivero F."/>
            <person name="Bankier A.T."/>
            <person name="Lehmann R."/>
            <person name="Hamlin N."/>
            <person name="Davies R."/>
            <person name="Gaudet P."/>
            <person name="Fey P."/>
            <person name="Pilcher K."/>
            <person name="Chen G."/>
            <person name="Saunders D."/>
            <person name="Sodergren E.J."/>
            <person name="Davis P."/>
            <person name="Kerhornou A."/>
            <person name="Nie X."/>
            <person name="Hall N."/>
            <person name="Anjard C."/>
            <person name="Hemphill L."/>
            <person name="Bason N."/>
            <person name="Farbrother P."/>
            <person name="Desany B."/>
            <person name="Just E."/>
            <person name="Morio T."/>
            <person name="Rost R."/>
            <person name="Churcher C.M."/>
            <person name="Cooper J."/>
            <person name="Haydock S."/>
            <person name="van Driessche N."/>
            <person name="Cronin A."/>
            <person name="Goodhead I."/>
            <person name="Muzny D.M."/>
            <person name="Mourier T."/>
            <person name="Pain A."/>
            <person name="Lu M."/>
            <person name="Harper D."/>
            <person name="Lindsay R."/>
            <person name="Hauser H."/>
            <person name="James K.D."/>
            <person name="Quiles M."/>
            <person name="Madan Babu M."/>
            <person name="Saito T."/>
            <person name="Buchrieser C."/>
            <person name="Wardroper A."/>
            <person name="Felder M."/>
            <person name="Thangavelu M."/>
            <person name="Johnson D."/>
            <person name="Knights A."/>
            <person name="Loulseged H."/>
            <person name="Mungall K.L."/>
            <person name="Oliver K."/>
            <person name="Price C."/>
            <person name="Quail M.A."/>
            <person name="Urushihara H."/>
            <person name="Hernandez J."/>
            <person name="Rabbinowitsch E."/>
            <person name="Steffen D."/>
            <person name="Sanders M."/>
            <person name="Ma J."/>
            <person name="Kohara Y."/>
            <person name="Sharp S."/>
            <person name="Simmonds M.N."/>
            <person name="Spiegler S."/>
            <person name="Tivey A."/>
            <person name="Sugano S."/>
            <person name="White B."/>
            <person name="Walker D."/>
            <person name="Woodward J.R."/>
            <person name="Winckler T."/>
            <person name="Tanaka Y."/>
            <person name="Shaulsky G."/>
            <person name="Schleicher M."/>
            <person name="Weinstock G.M."/>
            <person name="Rosenthal A."/>
            <person name="Cox E.C."/>
            <person name="Chisholm R.L."/>
            <person name="Gibbs R.A."/>
            <person name="Loomis W.F."/>
            <person name="Platzer M."/>
            <person name="Kay R.R."/>
            <person name="Williams J.G."/>
            <person name="Dear P.H."/>
            <person name="Noegel A.A."/>
            <person name="Barrell B.G."/>
            <person name="Kuspa A."/>
        </authorList>
    </citation>
    <scope>NUCLEOTIDE SEQUENCE [LARGE SCALE GENOMIC DNA]</scope>
    <source>
        <strain>AX4</strain>
    </source>
</reference>
<comment type="function">
    <text evidence="1">The glycine cleavage system catalyzes the degradation of glycine. The H protein shuttles the methylamine group of glycine from the P protein to the T protein (By similarity).</text>
</comment>
<comment type="cofactor">
    <cofactor evidence="1">
        <name>(R)-lipoate</name>
        <dbReference type="ChEBI" id="CHEBI:83088"/>
    </cofactor>
    <text evidence="1">Binds 1 lipoyl cofactor covalently.</text>
</comment>
<comment type="subunit">
    <text evidence="1">The glycine cleavage system is composed of four proteins: P, T, L and H.</text>
</comment>
<comment type="similarity">
    <text evidence="3">Belongs to the GcvH family.</text>
</comment>
<keyword id="KW-0450">Lipoyl</keyword>
<keyword id="KW-1185">Reference proteome</keyword>
<feature type="chain" id="PRO_0000328549" description="Putative glycine cleavage system H protein 3">
    <location>
        <begin position="1"/>
        <end position="149"/>
    </location>
</feature>
<feature type="domain" description="Lipoyl-binding" evidence="2">
    <location>
        <begin position="39"/>
        <end position="121"/>
    </location>
</feature>
<feature type="modified residue" description="N6-lipoyllysine" evidence="1 2">
    <location>
        <position position="80"/>
    </location>
</feature>
<sequence length="149" mass="17004">MISNFLKSNNIKNNSPFRSFCTRYSESHEWIKFNHRNKTCTLGITKYASDQLKSIVNINLPDLNSTITRKQPFGNIESTKTVADLFSDVDGKAVLLNSDVIVDPTIVSHSPEDKGWLIKMESNDFESFNKMMTKSEYGQFLKDINKSNV</sequence>
<evidence type="ECO:0000250" key="1"/>
<evidence type="ECO:0000255" key="2">
    <source>
        <dbReference type="PROSITE-ProRule" id="PRU01066"/>
    </source>
</evidence>
<evidence type="ECO:0000305" key="3"/>
<name>GCSH3_DICDI</name>
<proteinExistence type="inferred from homology"/>
<organism>
    <name type="scientific">Dictyostelium discoideum</name>
    <name type="common">Social amoeba</name>
    <dbReference type="NCBI Taxonomy" id="44689"/>
    <lineage>
        <taxon>Eukaryota</taxon>
        <taxon>Amoebozoa</taxon>
        <taxon>Evosea</taxon>
        <taxon>Eumycetozoa</taxon>
        <taxon>Dictyostelia</taxon>
        <taxon>Dictyosteliales</taxon>
        <taxon>Dictyosteliaceae</taxon>
        <taxon>Dictyostelium</taxon>
    </lineage>
</organism>